<feature type="chain" id="PRO_0000189006" description="Protein SCAR3">
    <location>
        <begin position="1"/>
        <end position="1020"/>
    </location>
</feature>
<feature type="domain" description="WH2">
    <location>
        <begin position="954"/>
        <end position="972"/>
    </location>
</feature>
<feature type="region of interest" description="Disordered" evidence="1">
    <location>
        <begin position="167"/>
        <end position="198"/>
    </location>
</feature>
<feature type="region of interest" description="Disordered" evidence="1">
    <location>
        <begin position="351"/>
        <end position="382"/>
    </location>
</feature>
<feature type="region of interest" description="Disordered" evidence="1">
    <location>
        <begin position="802"/>
        <end position="827"/>
    </location>
</feature>
<feature type="compositionally biased region" description="Basic residues" evidence="1">
    <location>
        <begin position="174"/>
        <end position="191"/>
    </location>
</feature>
<feature type="compositionally biased region" description="Basic and acidic residues" evidence="1">
    <location>
        <begin position="365"/>
        <end position="382"/>
    </location>
</feature>
<feature type="compositionally biased region" description="Polar residues" evidence="1">
    <location>
        <begin position="802"/>
        <end position="814"/>
    </location>
</feature>
<dbReference type="EMBL" id="AY743925">
    <property type="protein sequence ID" value="AAU93850.1"/>
    <property type="molecule type" value="mRNA"/>
</dbReference>
<dbReference type="EMBL" id="AC021043">
    <property type="protein sequence ID" value="AAF88121.1"/>
    <property type="molecule type" value="Genomic_DNA"/>
</dbReference>
<dbReference type="EMBL" id="CP002684">
    <property type="protein sequence ID" value="AEE31052.1"/>
    <property type="molecule type" value="Genomic_DNA"/>
</dbReference>
<dbReference type="PIR" id="B86414">
    <property type="entry name" value="B86414"/>
</dbReference>
<dbReference type="RefSeq" id="NP_174212.2">
    <molecule id="Q9LP46-1"/>
    <property type="nucleotide sequence ID" value="NM_102658.3"/>
</dbReference>
<dbReference type="BioGRID" id="25026">
    <property type="interactions" value="11"/>
</dbReference>
<dbReference type="ELM" id="Q9LP46"/>
<dbReference type="FunCoup" id="Q9LP46">
    <property type="interactions" value="882"/>
</dbReference>
<dbReference type="IntAct" id="Q9LP46">
    <property type="interactions" value="10"/>
</dbReference>
<dbReference type="STRING" id="3702.Q9LP46"/>
<dbReference type="GlyGen" id="Q9LP46">
    <property type="glycosylation" value="1 site"/>
</dbReference>
<dbReference type="iPTMnet" id="Q9LP46"/>
<dbReference type="PaxDb" id="3702-AT1G29170.1"/>
<dbReference type="ProteomicsDB" id="226623">
    <molecule id="Q9LP46-1"/>
</dbReference>
<dbReference type="EnsemblPlants" id="AT1G29170.1">
    <molecule id="Q9LP46-1"/>
    <property type="protein sequence ID" value="AT1G29170.1"/>
    <property type="gene ID" value="AT1G29170"/>
</dbReference>
<dbReference type="GeneID" id="839791"/>
<dbReference type="Gramene" id="AT1G29170.1">
    <molecule id="Q9LP46-1"/>
    <property type="protein sequence ID" value="AT1G29170.1"/>
    <property type="gene ID" value="AT1G29170"/>
</dbReference>
<dbReference type="KEGG" id="ath:AT1G29170"/>
<dbReference type="Araport" id="AT1G29170"/>
<dbReference type="TAIR" id="AT1G29170">
    <property type="gene designation" value="WAVE2"/>
</dbReference>
<dbReference type="eggNOG" id="ENOG502QSPV">
    <property type="taxonomic scope" value="Eukaryota"/>
</dbReference>
<dbReference type="HOGENOM" id="CLU_005038_0_0_1"/>
<dbReference type="InParanoid" id="Q9LP46"/>
<dbReference type="OMA" id="HENADDM"/>
<dbReference type="PhylomeDB" id="Q9LP46"/>
<dbReference type="PRO" id="PR:Q9LP46"/>
<dbReference type="Proteomes" id="UP000006548">
    <property type="component" value="Chromosome 1"/>
</dbReference>
<dbReference type="ExpressionAtlas" id="Q9LP46">
    <property type="expression patterns" value="baseline and differential"/>
</dbReference>
<dbReference type="GO" id="GO:0005856">
    <property type="term" value="C:cytoskeleton"/>
    <property type="evidence" value="ECO:0007669"/>
    <property type="project" value="UniProtKB-SubCell"/>
</dbReference>
<dbReference type="GO" id="GO:0031209">
    <property type="term" value="C:SCAR complex"/>
    <property type="evidence" value="ECO:0000304"/>
    <property type="project" value="TAIR"/>
</dbReference>
<dbReference type="GO" id="GO:0003779">
    <property type="term" value="F:actin binding"/>
    <property type="evidence" value="ECO:0007669"/>
    <property type="project" value="UniProtKB-KW"/>
</dbReference>
<dbReference type="GO" id="GO:0030036">
    <property type="term" value="P:actin cytoskeleton organization"/>
    <property type="evidence" value="ECO:0007669"/>
    <property type="project" value="InterPro"/>
</dbReference>
<dbReference type="GO" id="GO:0051127">
    <property type="term" value="P:positive regulation of actin nucleation"/>
    <property type="evidence" value="ECO:0000315"/>
    <property type="project" value="TAIR"/>
</dbReference>
<dbReference type="Gene3D" id="1.20.5.340">
    <property type="match status" value="1"/>
</dbReference>
<dbReference type="Gene3D" id="6.10.280.150">
    <property type="match status" value="1"/>
</dbReference>
<dbReference type="InterPro" id="IPR028288">
    <property type="entry name" value="SCAR/WAVE_fam"/>
</dbReference>
<dbReference type="PANTHER" id="PTHR12902:SF33">
    <property type="entry name" value="PROTEIN SCAR3"/>
    <property type="match status" value="1"/>
</dbReference>
<dbReference type="PANTHER" id="PTHR12902">
    <property type="entry name" value="WASP-1"/>
    <property type="match status" value="1"/>
</dbReference>
<gene>
    <name type="primary">SCAR3</name>
    <name type="ordered locus">At1g29170</name>
    <name type="ORF">F28N24.14</name>
</gene>
<reference key="1">
    <citation type="journal article" date="2004" name="Proc. Natl. Acad. Sci. U.S.A.">
        <title>Activation of Arp2/3 complex-dependent actin polymerization by plant proteins distantly related to Scar/WAVE.</title>
        <authorList>
            <person name="Frank M."/>
            <person name="Egile C."/>
            <person name="Dyachok J."/>
            <person name="Djakovic S."/>
            <person name="Nolasco M."/>
            <person name="Li R."/>
            <person name="Smith L.G."/>
        </authorList>
    </citation>
    <scope>NUCLEOTIDE SEQUENCE [MRNA]</scope>
    <scope>TISSUE SPECIFICITY</scope>
    <scope>INTERACTION WITH BRK1</scope>
</reference>
<reference key="2">
    <citation type="journal article" date="2000" name="Nature">
        <title>Sequence and analysis of chromosome 1 of the plant Arabidopsis thaliana.</title>
        <authorList>
            <person name="Theologis A."/>
            <person name="Ecker J.R."/>
            <person name="Palm C.J."/>
            <person name="Federspiel N.A."/>
            <person name="Kaul S."/>
            <person name="White O."/>
            <person name="Alonso J."/>
            <person name="Altafi H."/>
            <person name="Araujo R."/>
            <person name="Bowman C.L."/>
            <person name="Brooks S.Y."/>
            <person name="Buehler E."/>
            <person name="Chan A."/>
            <person name="Chao Q."/>
            <person name="Chen H."/>
            <person name="Cheuk R.F."/>
            <person name="Chin C.W."/>
            <person name="Chung M.K."/>
            <person name="Conn L."/>
            <person name="Conway A.B."/>
            <person name="Conway A.R."/>
            <person name="Creasy T.H."/>
            <person name="Dewar K."/>
            <person name="Dunn P."/>
            <person name="Etgu P."/>
            <person name="Feldblyum T.V."/>
            <person name="Feng J.-D."/>
            <person name="Fong B."/>
            <person name="Fujii C.Y."/>
            <person name="Gill J.E."/>
            <person name="Goldsmith A.D."/>
            <person name="Haas B."/>
            <person name="Hansen N.F."/>
            <person name="Hughes B."/>
            <person name="Huizar L."/>
            <person name="Hunter J.L."/>
            <person name="Jenkins J."/>
            <person name="Johnson-Hopson C."/>
            <person name="Khan S."/>
            <person name="Khaykin E."/>
            <person name="Kim C.J."/>
            <person name="Koo H.L."/>
            <person name="Kremenetskaia I."/>
            <person name="Kurtz D.B."/>
            <person name="Kwan A."/>
            <person name="Lam B."/>
            <person name="Langin-Hooper S."/>
            <person name="Lee A."/>
            <person name="Lee J.M."/>
            <person name="Lenz C.A."/>
            <person name="Li J.H."/>
            <person name="Li Y.-P."/>
            <person name="Lin X."/>
            <person name="Liu S.X."/>
            <person name="Liu Z.A."/>
            <person name="Luros J.S."/>
            <person name="Maiti R."/>
            <person name="Marziali A."/>
            <person name="Militscher J."/>
            <person name="Miranda M."/>
            <person name="Nguyen M."/>
            <person name="Nierman W.C."/>
            <person name="Osborne B.I."/>
            <person name="Pai G."/>
            <person name="Peterson J."/>
            <person name="Pham P.K."/>
            <person name="Rizzo M."/>
            <person name="Rooney T."/>
            <person name="Rowley D."/>
            <person name="Sakano H."/>
            <person name="Salzberg S.L."/>
            <person name="Schwartz J.R."/>
            <person name="Shinn P."/>
            <person name="Southwick A.M."/>
            <person name="Sun H."/>
            <person name="Tallon L.J."/>
            <person name="Tambunga G."/>
            <person name="Toriumi M.J."/>
            <person name="Town C.D."/>
            <person name="Utterback T."/>
            <person name="Van Aken S."/>
            <person name="Vaysberg M."/>
            <person name="Vysotskaia V.S."/>
            <person name="Walker M."/>
            <person name="Wu D."/>
            <person name="Yu G."/>
            <person name="Fraser C.M."/>
            <person name="Venter J.C."/>
            <person name="Davis R.W."/>
        </authorList>
    </citation>
    <scope>NUCLEOTIDE SEQUENCE [LARGE SCALE GENOMIC DNA]</scope>
    <source>
        <strain>cv. Columbia</strain>
    </source>
</reference>
<reference key="3">
    <citation type="journal article" date="2017" name="Plant J.">
        <title>Araport11: a complete reannotation of the Arabidopsis thaliana reference genome.</title>
        <authorList>
            <person name="Cheng C.Y."/>
            <person name="Krishnakumar V."/>
            <person name="Chan A.P."/>
            <person name="Thibaud-Nissen F."/>
            <person name="Schobel S."/>
            <person name="Town C.D."/>
        </authorList>
    </citation>
    <scope>GENOME REANNOTATION</scope>
    <source>
        <strain>cv. Columbia</strain>
    </source>
</reference>
<reference key="4">
    <citation type="journal article" date="2004" name="Plant Cell">
        <title>NAPP and PIRP encode subunits of a putative wave regulatory protein complex involved in plant cell morphogenesis.</title>
        <authorList>
            <person name="Brembu T."/>
            <person name="Winge P."/>
            <person name="Seem M."/>
            <person name="Bones A.M."/>
        </authorList>
    </citation>
    <scope>FUNCTION</scope>
    <scope>IDENTIFICATION</scope>
</reference>
<reference key="5">
    <citation type="journal article" date="2007" name="Development">
        <title>The role of Arabidopsis SCAR genes in ARP2-ARP3-dependent cell morphogenesis.</title>
        <authorList>
            <person name="Uhrig J.F."/>
            <person name="Mutondo M."/>
            <person name="Zimmermann I."/>
            <person name="Deeks M.J."/>
            <person name="Machesky L.M."/>
            <person name="Thomas P."/>
            <person name="Uhrig S."/>
            <person name="Rambke C."/>
            <person name="Hussey P.J."/>
            <person name="Huelskamp M."/>
        </authorList>
    </citation>
    <scope>INTERACTION WITH SPK1; ABI1; ABI2; ABI3 AND ABI4</scope>
</reference>
<protein>
    <recommendedName>
        <fullName>Protein SCAR3</fullName>
        <shortName>AtSCAR3</shortName>
    </recommendedName>
    <alternativeName>
        <fullName>Protein WAVE2</fullName>
    </alternativeName>
</protein>
<evidence type="ECO:0000256" key="1">
    <source>
        <dbReference type="SAM" id="MobiDB-lite"/>
    </source>
</evidence>
<evidence type="ECO:0000269" key="2">
    <source>
    </source>
</evidence>
<evidence type="ECO:0000269" key="3">
    <source>
    </source>
</evidence>
<evidence type="ECO:0000269" key="4">
    <source>
    </source>
</evidence>
<evidence type="ECO:0000305" key="5"/>
<sequence>MPRNVYGMNQSEVYRNVDREDPKAILNGVAVTGLVGVLRQLGDLAEFAAEIFHGIQEEVMATASRSNQLKIRLQHIEATVPPLEKAMLAQTTHIHFAYTGGLEWHPRIPITQNHLIYDDLPHIIMDPYEECRGPPRLHLLDKFDINGPGSCLKRYSDPTYFRRASSNLSQGNKKFQKDKKHCKMKKKKTSSRSRDMSRLASLANQNARKTFASFSFSGQTSSTKTTSTSDMEKRYDFQDHHSRSFESRSGSGYNECLSTATSSLKTGERPKGVFVSSSLTPGSCTIASVLSECETEDAHDNFQFSPSQGQAARGSSCVSWDEKAEIVESLGLQTDEASEMVEANSVVDTLDEKPSYGEGIGGVDFHSKDNENDKSESGLRKRAGIDEVREIKNGREIVGEPRDSEQETESEGECFVDALNTIESESENNQGLQTSQVSSSCGVADERLEKSVCEQETEQNSYSVEDSCRSMDGLMANSFKNEENASSENVSVEMHQQNLQAGSDINRLQKNDLCANKDMRNDSGGKDTITFTFVPGLENSLVDSSNPLIHHGLQENQETEAESSGDLEAFKIWTNGGLLGLKPSKPPVLAMPSSLSPDCKTEERTVGFAEAEKDKADDLVENASHRHVLNNSSLATPGTQNPGSSNGIVMGIVDQRESHETSSGVFGLSHKFLTSGFRRKDSFAHDRKTVPATIPENDEVTTERRRFCDQDINEKTFMDPFRDEAPIDWITSSPPLQHMKISLNPADTLQASRLKLKFSDGDNTYNTFSSFQLLPETGTSLPDSYSDDDTFCRSSPYMSDTDYLSDNHSLSNSEPWEESSDSHGRKEQELYDSFHESRHVDNNAEASPLGIKSESSCVAVNLSYLQNPAEPLPPPFPPMQWMVSKTPSEKMEDKTQSLQLQEALRFAFEKHISLPTAKNELPSMVTSAPKPEIKAHLKNNVREEKQSANAKETETGDFLQQIRTQQFNLRPVVMTTTSSATATTDPIINTKISAILEKANSIRQAVASKDGDESDTWSDT</sequence>
<comment type="function">
    <text evidence="2">Involved in regulation of actin and microtubule organization. Part of a WAVE complex that activates the Arp2/3 complex. Regulates trichome branch positioning and expansion.</text>
</comment>
<comment type="subunit">
    <text evidence="3 4">Binds BRK1. Interacts with SPK1, ABI1, ABI2, ABI3 and ABI4.</text>
</comment>
<comment type="interaction">
    <interactant intactId="EBI-1547699">
        <id>Q9LP46</id>
    </interactant>
    <interactant intactId="EBI-1547691">
        <id>Q94JY4</id>
        <label>BRK1</label>
    </interactant>
    <organismsDiffer>false</organismsDiffer>
    <experiments>3</experiments>
</comment>
<comment type="subcellular location">
    <subcellularLocation>
        <location>Cytoplasm</location>
        <location>Cytoskeleton</location>
    </subcellularLocation>
</comment>
<comment type="alternative products">
    <event type="alternative splicing"/>
    <isoform>
        <id>Q9LP46-1</id>
        <name>1</name>
        <sequence type="displayed"/>
    </isoform>
    <text>A number of isoforms are produced. According to EST sequences.</text>
</comment>
<comment type="tissue specificity">
    <text evidence="3">Expressed in expanding cotyledons, expanding leaves and expanding siliques containing developing embryos. Detected in unopened flower buds. Reduced expression in mature leaves and mature cotyledons.</text>
</comment>
<comment type="domain">
    <text>Activates the Arp2/3 complex and binds actin through the C-terminal VCA (verprolin homology/cofilin homology/acidic) domain consisting of a WH2 domain followed by an Arp2/3-binding acidic motif (A), separated by a conserved linker region (C). Binds BRK1 through the N-terminal Scar homology domain (SHD).</text>
</comment>
<comment type="similarity">
    <text evidence="5">Belongs to the SCAR/WAVE family.</text>
</comment>
<accession>Q9LP46</accession>
<name>SCAR3_ARATH</name>
<organism>
    <name type="scientific">Arabidopsis thaliana</name>
    <name type="common">Mouse-ear cress</name>
    <dbReference type="NCBI Taxonomy" id="3702"/>
    <lineage>
        <taxon>Eukaryota</taxon>
        <taxon>Viridiplantae</taxon>
        <taxon>Streptophyta</taxon>
        <taxon>Embryophyta</taxon>
        <taxon>Tracheophyta</taxon>
        <taxon>Spermatophyta</taxon>
        <taxon>Magnoliopsida</taxon>
        <taxon>eudicotyledons</taxon>
        <taxon>Gunneridae</taxon>
        <taxon>Pentapetalae</taxon>
        <taxon>rosids</taxon>
        <taxon>malvids</taxon>
        <taxon>Brassicales</taxon>
        <taxon>Brassicaceae</taxon>
        <taxon>Camelineae</taxon>
        <taxon>Arabidopsis</taxon>
    </lineage>
</organism>
<proteinExistence type="evidence at protein level"/>
<keyword id="KW-0009">Actin-binding</keyword>
<keyword id="KW-0025">Alternative splicing</keyword>
<keyword id="KW-0963">Cytoplasm</keyword>
<keyword id="KW-0206">Cytoskeleton</keyword>
<keyword id="KW-1185">Reference proteome</keyword>